<keyword id="KW-0175">Coiled coil</keyword>
<keyword id="KW-0472">Membrane</keyword>
<keyword id="KW-1185">Reference proteome</keyword>
<keyword id="KW-0732">Signal</keyword>
<keyword id="KW-0812">Transmembrane</keyword>
<keyword id="KW-1133">Transmembrane helix</keyword>
<sequence length="194" mass="21465">MKKAFLVFLSVVLVTTVFLVKQQESVAQAKQLEYSGEEIFKGFVFAQGEVGKQLPEVFNKAMTDKLNTKQAKAFANQVVADIKKEDADFFDNLKKAVYSKDALKVDELLKKAGQIVEEKVEAAKEIAASKDDTSRVQAELVNTVDTANYFYYVSYVAAAGALILIILAIDITPIAISDNVDREMAIRTLVDELN</sequence>
<comment type="subcellular location">
    <subcellularLocation>
        <location evidence="2">Membrane</location>
        <topology evidence="2">Single-pass membrane protein</topology>
    </subcellularLocation>
</comment>
<proteinExistence type="inferred from homology"/>
<name>YITM_BACSU</name>
<accession>O06748</accession>
<protein>
    <recommendedName>
        <fullName>Uncharacterized protein YitM</fullName>
    </recommendedName>
</protein>
<reference key="1">
    <citation type="journal article" date="1997" name="Microbiology">
        <title>A Bacillus subtilis chromosome segment at the 100 degrees to 102 degrees position encoding 11 membrane proteins.</title>
        <authorList>
            <person name="Roche B."/>
            <person name="Autret S."/>
            <person name="Levine A."/>
            <person name="Vannier F."/>
            <person name="Medina N."/>
            <person name="Seror S.J."/>
        </authorList>
    </citation>
    <scope>NUCLEOTIDE SEQUENCE [GENOMIC DNA]</scope>
</reference>
<reference key="2">
    <citation type="journal article" date="1997" name="Nature">
        <title>The complete genome sequence of the Gram-positive bacterium Bacillus subtilis.</title>
        <authorList>
            <person name="Kunst F."/>
            <person name="Ogasawara N."/>
            <person name="Moszer I."/>
            <person name="Albertini A.M."/>
            <person name="Alloni G."/>
            <person name="Azevedo V."/>
            <person name="Bertero M.G."/>
            <person name="Bessieres P."/>
            <person name="Bolotin A."/>
            <person name="Borchert S."/>
            <person name="Borriss R."/>
            <person name="Boursier L."/>
            <person name="Brans A."/>
            <person name="Braun M."/>
            <person name="Brignell S.C."/>
            <person name="Bron S."/>
            <person name="Brouillet S."/>
            <person name="Bruschi C.V."/>
            <person name="Caldwell B."/>
            <person name="Capuano V."/>
            <person name="Carter N.M."/>
            <person name="Choi S.-K."/>
            <person name="Codani J.-J."/>
            <person name="Connerton I.F."/>
            <person name="Cummings N.J."/>
            <person name="Daniel R.A."/>
            <person name="Denizot F."/>
            <person name="Devine K.M."/>
            <person name="Duesterhoeft A."/>
            <person name="Ehrlich S.D."/>
            <person name="Emmerson P.T."/>
            <person name="Entian K.-D."/>
            <person name="Errington J."/>
            <person name="Fabret C."/>
            <person name="Ferrari E."/>
            <person name="Foulger D."/>
            <person name="Fritz C."/>
            <person name="Fujita M."/>
            <person name="Fujita Y."/>
            <person name="Fuma S."/>
            <person name="Galizzi A."/>
            <person name="Galleron N."/>
            <person name="Ghim S.-Y."/>
            <person name="Glaser P."/>
            <person name="Goffeau A."/>
            <person name="Golightly E.J."/>
            <person name="Grandi G."/>
            <person name="Guiseppi G."/>
            <person name="Guy B.J."/>
            <person name="Haga K."/>
            <person name="Haiech J."/>
            <person name="Harwood C.R."/>
            <person name="Henaut A."/>
            <person name="Hilbert H."/>
            <person name="Holsappel S."/>
            <person name="Hosono S."/>
            <person name="Hullo M.-F."/>
            <person name="Itaya M."/>
            <person name="Jones L.-M."/>
            <person name="Joris B."/>
            <person name="Karamata D."/>
            <person name="Kasahara Y."/>
            <person name="Klaerr-Blanchard M."/>
            <person name="Klein C."/>
            <person name="Kobayashi Y."/>
            <person name="Koetter P."/>
            <person name="Koningstein G."/>
            <person name="Krogh S."/>
            <person name="Kumano M."/>
            <person name="Kurita K."/>
            <person name="Lapidus A."/>
            <person name="Lardinois S."/>
            <person name="Lauber J."/>
            <person name="Lazarevic V."/>
            <person name="Lee S.-M."/>
            <person name="Levine A."/>
            <person name="Liu H."/>
            <person name="Masuda S."/>
            <person name="Mauel C."/>
            <person name="Medigue C."/>
            <person name="Medina N."/>
            <person name="Mellado R.P."/>
            <person name="Mizuno M."/>
            <person name="Moestl D."/>
            <person name="Nakai S."/>
            <person name="Noback M."/>
            <person name="Noone D."/>
            <person name="O'Reilly M."/>
            <person name="Ogawa K."/>
            <person name="Ogiwara A."/>
            <person name="Oudega B."/>
            <person name="Park S.-H."/>
            <person name="Parro V."/>
            <person name="Pohl T.M."/>
            <person name="Portetelle D."/>
            <person name="Porwollik S."/>
            <person name="Prescott A.M."/>
            <person name="Presecan E."/>
            <person name="Pujic P."/>
            <person name="Purnelle B."/>
            <person name="Rapoport G."/>
            <person name="Rey M."/>
            <person name="Reynolds S."/>
            <person name="Rieger M."/>
            <person name="Rivolta C."/>
            <person name="Rocha E."/>
            <person name="Roche B."/>
            <person name="Rose M."/>
            <person name="Sadaie Y."/>
            <person name="Sato T."/>
            <person name="Scanlan E."/>
            <person name="Schleich S."/>
            <person name="Schroeter R."/>
            <person name="Scoffone F."/>
            <person name="Sekiguchi J."/>
            <person name="Sekowska A."/>
            <person name="Seror S.J."/>
            <person name="Serror P."/>
            <person name="Shin B.-S."/>
            <person name="Soldo B."/>
            <person name="Sorokin A."/>
            <person name="Tacconi E."/>
            <person name="Takagi T."/>
            <person name="Takahashi H."/>
            <person name="Takemaru K."/>
            <person name="Takeuchi M."/>
            <person name="Tamakoshi A."/>
            <person name="Tanaka T."/>
            <person name="Terpstra P."/>
            <person name="Tognoni A."/>
            <person name="Tosato V."/>
            <person name="Uchiyama S."/>
            <person name="Vandenbol M."/>
            <person name="Vannier F."/>
            <person name="Vassarotti A."/>
            <person name="Viari A."/>
            <person name="Wambutt R."/>
            <person name="Wedler E."/>
            <person name="Wedler H."/>
            <person name="Weitzenegger T."/>
            <person name="Winters P."/>
            <person name="Wipat A."/>
            <person name="Yamamoto H."/>
            <person name="Yamane K."/>
            <person name="Yasumoto K."/>
            <person name="Yata K."/>
            <person name="Yoshida K."/>
            <person name="Yoshikawa H.-F."/>
            <person name="Zumstein E."/>
            <person name="Yoshikawa H."/>
            <person name="Danchin A."/>
        </authorList>
    </citation>
    <scope>NUCLEOTIDE SEQUENCE [LARGE SCALE GENOMIC DNA]</scope>
    <source>
        <strain>168</strain>
    </source>
</reference>
<gene>
    <name type="primary">yitM</name>
    <name type="ordered locus">BSU11040</name>
</gene>
<organism>
    <name type="scientific">Bacillus subtilis (strain 168)</name>
    <dbReference type="NCBI Taxonomy" id="224308"/>
    <lineage>
        <taxon>Bacteria</taxon>
        <taxon>Bacillati</taxon>
        <taxon>Bacillota</taxon>
        <taxon>Bacilli</taxon>
        <taxon>Bacillales</taxon>
        <taxon>Bacillaceae</taxon>
        <taxon>Bacillus</taxon>
    </lineage>
</organism>
<evidence type="ECO:0000255" key="1"/>
<evidence type="ECO:0000305" key="2"/>
<feature type="signal peptide" evidence="1">
    <location>
        <begin position="1"/>
        <end position="29"/>
    </location>
</feature>
<feature type="chain" id="PRO_0000013703" description="Uncharacterized protein YitM">
    <location>
        <begin position="30"/>
        <end position="194"/>
    </location>
</feature>
<feature type="transmembrane region" description="Helical" evidence="1">
    <location>
        <begin position="149"/>
        <end position="171"/>
    </location>
</feature>
<feature type="coiled-coil region" evidence="1">
    <location>
        <begin position="104"/>
        <end position="131"/>
    </location>
</feature>
<dbReference type="EMBL" id="Y09476">
    <property type="protein sequence ID" value="CAA70622.1"/>
    <property type="molecule type" value="Genomic_DNA"/>
</dbReference>
<dbReference type="EMBL" id="AL009126">
    <property type="protein sequence ID" value="CAB12944.1"/>
    <property type="molecule type" value="Genomic_DNA"/>
</dbReference>
<dbReference type="PIR" id="F69840">
    <property type="entry name" value="F69840"/>
</dbReference>
<dbReference type="RefSeq" id="NP_388985.1">
    <property type="nucleotide sequence ID" value="NC_000964.3"/>
</dbReference>
<dbReference type="RefSeq" id="WP_003244950.1">
    <property type="nucleotide sequence ID" value="NZ_OZ025638.1"/>
</dbReference>
<dbReference type="SMR" id="O06748"/>
<dbReference type="FunCoup" id="O06748">
    <property type="interactions" value="11"/>
</dbReference>
<dbReference type="STRING" id="224308.BSU11040"/>
<dbReference type="TCDB" id="9.B.139.1.6">
    <property type="family name" value="the pmf-dissipating cannabalism toxin sdpc (sdpc) family"/>
</dbReference>
<dbReference type="PaxDb" id="224308-BSU11040"/>
<dbReference type="EnsemblBacteria" id="CAB12944">
    <property type="protein sequence ID" value="CAB12944"/>
    <property type="gene ID" value="BSU_11040"/>
</dbReference>
<dbReference type="GeneID" id="936374"/>
<dbReference type="KEGG" id="bsu:BSU11040"/>
<dbReference type="PATRIC" id="fig|224308.179.peg.1186"/>
<dbReference type="eggNOG" id="ENOG5030EJM">
    <property type="taxonomic scope" value="Bacteria"/>
</dbReference>
<dbReference type="InParanoid" id="O06748"/>
<dbReference type="OrthoDB" id="2906254at2"/>
<dbReference type="BioCyc" id="BSUB:BSU11040-MONOMER"/>
<dbReference type="Proteomes" id="UP000001570">
    <property type="component" value="Chromosome"/>
</dbReference>
<dbReference type="GO" id="GO:0016020">
    <property type="term" value="C:membrane"/>
    <property type="evidence" value="ECO:0007669"/>
    <property type="project" value="UniProtKB-SubCell"/>
</dbReference>
<dbReference type="InterPro" id="IPR023888">
    <property type="entry name" value="SdpC-like"/>
</dbReference>
<dbReference type="NCBIfam" id="TIGR04032">
    <property type="entry name" value="toxin_SdpC"/>
    <property type="match status" value="1"/>
</dbReference>